<name>SUCC_NEIM0</name>
<comment type="function">
    <text evidence="1">Succinyl-CoA synthetase functions in the citric acid cycle (TCA), coupling the hydrolysis of succinyl-CoA to the synthesis of either ATP or GTP and thus represents the only step of substrate-level phosphorylation in the TCA. The beta subunit provides nucleotide specificity of the enzyme and binds the substrate succinate, while the binding sites for coenzyme A and phosphate are found in the alpha subunit.</text>
</comment>
<comment type="catalytic activity">
    <reaction evidence="1">
        <text>succinate + ATP + CoA = succinyl-CoA + ADP + phosphate</text>
        <dbReference type="Rhea" id="RHEA:17661"/>
        <dbReference type="ChEBI" id="CHEBI:30031"/>
        <dbReference type="ChEBI" id="CHEBI:30616"/>
        <dbReference type="ChEBI" id="CHEBI:43474"/>
        <dbReference type="ChEBI" id="CHEBI:57287"/>
        <dbReference type="ChEBI" id="CHEBI:57292"/>
        <dbReference type="ChEBI" id="CHEBI:456216"/>
        <dbReference type="EC" id="6.2.1.5"/>
    </reaction>
    <physiologicalReaction direction="right-to-left" evidence="1">
        <dbReference type="Rhea" id="RHEA:17663"/>
    </physiologicalReaction>
</comment>
<comment type="catalytic activity">
    <reaction evidence="1">
        <text>GTP + succinate + CoA = succinyl-CoA + GDP + phosphate</text>
        <dbReference type="Rhea" id="RHEA:22120"/>
        <dbReference type="ChEBI" id="CHEBI:30031"/>
        <dbReference type="ChEBI" id="CHEBI:37565"/>
        <dbReference type="ChEBI" id="CHEBI:43474"/>
        <dbReference type="ChEBI" id="CHEBI:57287"/>
        <dbReference type="ChEBI" id="CHEBI:57292"/>
        <dbReference type="ChEBI" id="CHEBI:58189"/>
    </reaction>
    <physiologicalReaction direction="right-to-left" evidence="1">
        <dbReference type="Rhea" id="RHEA:22122"/>
    </physiologicalReaction>
</comment>
<comment type="cofactor">
    <cofactor evidence="1">
        <name>Mg(2+)</name>
        <dbReference type="ChEBI" id="CHEBI:18420"/>
    </cofactor>
    <text evidence="1">Binds 1 Mg(2+) ion per subunit.</text>
</comment>
<comment type="pathway">
    <text evidence="1">Carbohydrate metabolism; tricarboxylic acid cycle; succinate from succinyl-CoA (ligase route): step 1/1.</text>
</comment>
<comment type="subunit">
    <text evidence="1">Heterotetramer of two alpha and two beta subunits.</text>
</comment>
<comment type="similarity">
    <text evidence="1">Belongs to the succinate/malate CoA ligase beta subunit family.</text>
</comment>
<accession>A9M4F8</accession>
<proteinExistence type="inferred from homology"/>
<gene>
    <name evidence="1" type="primary">sucC</name>
    <name type="ordered locus">NMCC_0902</name>
</gene>
<keyword id="KW-0067">ATP-binding</keyword>
<keyword id="KW-0436">Ligase</keyword>
<keyword id="KW-0460">Magnesium</keyword>
<keyword id="KW-0479">Metal-binding</keyword>
<keyword id="KW-0547">Nucleotide-binding</keyword>
<keyword id="KW-0816">Tricarboxylic acid cycle</keyword>
<protein>
    <recommendedName>
        <fullName evidence="1">Succinate--CoA ligase [ADP-forming] subunit beta</fullName>
        <ecNumber evidence="1">6.2.1.5</ecNumber>
    </recommendedName>
    <alternativeName>
        <fullName evidence="1">Succinyl-CoA synthetase subunit beta</fullName>
        <shortName evidence="1">SCS-beta</shortName>
    </alternativeName>
</protein>
<reference key="1">
    <citation type="journal article" date="2008" name="Genomics">
        <title>Characterization of ST-4821 complex, a unique Neisseria meningitidis clone.</title>
        <authorList>
            <person name="Peng J."/>
            <person name="Yang L."/>
            <person name="Yang F."/>
            <person name="Yang J."/>
            <person name="Yan Y."/>
            <person name="Nie H."/>
            <person name="Zhang X."/>
            <person name="Xiong Z."/>
            <person name="Jiang Y."/>
            <person name="Cheng F."/>
            <person name="Xu X."/>
            <person name="Chen S."/>
            <person name="Sun L."/>
            <person name="Li W."/>
            <person name="Shen Y."/>
            <person name="Shao Z."/>
            <person name="Liang X."/>
            <person name="Xu J."/>
            <person name="Jin Q."/>
        </authorList>
    </citation>
    <scope>NUCLEOTIDE SEQUENCE [LARGE SCALE GENOMIC DNA]</scope>
    <source>
        <strain>053442</strain>
    </source>
</reference>
<organism>
    <name type="scientific">Neisseria meningitidis serogroup C (strain 053442)</name>
    <dbReference type="NCBI Taxonomy" id="374833"/>
    <lineage>
        <taxon>Bacteria</taxon>
        <taxon>Pseudomonadati</taxon>
        <taxon>Pseudomonadota</taxon>
        <taxon>Betaproteobacteria</taxon>
        <taxon>Neisseriales</taxon>
        <taxon>Neisseriaceae</taxon>
        <taxon>Neisseria</taxon>
    </lineage>
</organism>
<feature type="chain" id="PRO_1000082138" description="Succinate--CoA ligase [ADP-forming] subunit beta">
    <location>
        <begin position="1"/>
        <end position="388"/>
    </location>
</feature>
<feature type="domain" description="ATP-grasp" evidence="1">
    <location>
        <begin position="9"/>
        <end position="245"/>
    </location>
</feature>
<feature type="binding site" evidence="1">
    <location>
        <position position="46"/>
    </location>
    <ligand>
        <name>ATP</name>
        <dbReference type="ChEBI" id="CHEBI:30616"/>
    </ligand>
</feature>
<feature type="binding site" evidence="1">
    <location>
        <begin position="53"/>
        <end position="55"/>
    </location>
    <ligand>
        <name>ATP</name>
        <dbReference type="ChEBI" id="CHEBI:30616"/>
    </ligand>
</feature>
<feature type="binding site" evidence="1">
    <location>
        <position position="100"/>
    </location>
    <ligand>
        <name>ATP</name>
        <dbReference type="ChEBI" id="CHEBI:30616"/>
    </ligand>
</feature>
<feature type="binding site" evidence="1">
    <location>
        <position position="103"/>
    </location>
    <ligand>
        <name>ATP</name>
        <dbReference type="ChEBI" id="CHEBI:30616"/>
    </ligand>
</feature>
<feature type="binding site" evidence="1">
    <location>
        <position position="108"/>
    </location>
    <ligand>
        <name>ATP</name>
        <dbReference type="ChEBI" id="CHEBI:30616"/>
    </ligand>
</feature>
<feature type="binding site" evidence="1">
    <location>
        <position position="200"/>
    </location>
    <ligand>
        <name>Mg(2+)</name>
        <dbReference type="ChEBI" id="CHEBI:18420"/>
    </ligand>
</feature>
<feature type="binding site" evidence="1">
    <location>
        <position position="214"/>
    </location>
    <ligand>
        <name>Mg(2+)</name>
        <dbReference type="ChEBI" id="CHEBI:18420"/>
    </ligand>
</feature>
<feature type="binding site" evidence="1">
    <location>
        <position position="265"/>
    </location>
    <ligand>
        <name>substrate</name>
        <note>ligand shared with subunit alpha</note>
    </ligand>
</feature>
<feature type="binding site" evidence="1">
    <location>
        <begin position="322"/>
        <end position="324"/>
    </location>
    <ligand>
        <name>substrate</name>
        <note>ligand shared with subunit alpha</note>
    </ligand>
</feature>
<dbReference type="EC" id="6.2.1.5" evidence="1"/>
<dbReference type="EMBL" id="CP000381">
    <property type="protein sequence ID" value="ABX73084.1"/>
    <property type="molecule type" value="Genomic_DNA"/>
</dbReference>
<dbReference type="SMR" id="A9M4F8"/>
<dbReference type="KEGG" id="nmn:NMCC_0902"/>
<dbReference type="HOGENOM" id="CLU_037430_0_2_4"/>
<dbReference type="UniPathway" id="UPA00223">
    <property type="reaction ID" value="UER00999"/>
</dbReference>
<dbReference type="Proteomes" id="UP000001177">
    <property type="component" value="Chromosome"/>
</dbReference>
<dbReference type="GO" id="GO:0005829">
    <property type="term" value="C:cytosol"/>
    <property type="evidence" value="ECO:0007669"/>
    <property type="project" value="TreeGrafter"/>
</dbReference>
<dbReference type="GO" id="GO:0042709">
    <property type="term" value="C:succinate-CoA ligase complex"/>
    <property type="evidence" value="ECO:0007669"/>
    <property type="project" value="TreeGrafter"/>
</dbReference>
<dbReference type="GO" id="GO:0005524">
    <property type="term" value="F:ATP binding"/>
    <property type="evidence" value="ECO:0007669"/>
    <property type="project" value="UniProtKB-UniRule"/>
</dbReference>
<dbReference type="GO" id="GO:0000287">
    <property type="term" value="F:magnesium ion binding"/>
    <property type="evidence" value="ECO:0007669"/>
    <property type="project" value="UniProtKB-UniRule"/>
</dbReference>
<dbReference type="GO" id="GO:0004775">
    <property type="term" value="F:succinate-CoA ligase (ADP-forming) activity"/>
    <property type="evidence" value="ECO:0007669"/>
    <property type="project" value="UniProtKB-UniRule"/>
</dbReference>
<dbReference type="GO" id="GO:0004776">
    <property type="term" value="F:succinate-CoA ligase (GDP-forming) activity"/>
    <property type="evidence" value="ECO:0007669"/>
    <property type="project" value="RHEA"/>
</dbReference>
<dbReference type="GO" id="GO:0006104">
    <property type="term" value="P:succinyl-CoA metabolic process"/>
    <property type="evidence" value="ECO:0007669"/>
    <property type="project" value="TreeGrafter"/>
</dbReference>
<dbReference type="GO" id="GO:0006099">
    <property type="term" value="P:tricarboxylic acid cycle"/>
    <property type="evidence" value="ECO:0007669"/>
    <property type="project" value="UniProtKB-UniRule"/>
</dbReference>
<dbReference type="FunFam" id="3.30.1490.20:FF:000002">
    <property type="entry name" value="Succinate--CoA ligase [ADP-forming] subunit beta"/>
    <property type="match status" value="1"/>
</dbReference>
<dbReference type="FunFam" id="3.30.470.20:FF:000002">
    <property type="entry name" value="Succinate--CoA ligase [ADP-forming] subunit beta"/>
    <property type="match status" value="1"/>
</dbReference>
<dbReference type="FunFam" id="3.40.50.261:FF:000001">
    <property type="entry name" value="Succinate--CoA ligase [ADP-forming] subunit beta"/>
    <property type="match status" value="1"/>
</dbReference>
<dbReference type="Gene3D" id="3.30.1490.20">
    <property type="entry name" value="ATP-grasp fold, A domain"/>
    <property type="match status" value="1"/>
</dbReference>
<dbReference type="Gene3D" id="3.30.470.20">
    <property type="entry name" value="ATP-grasp fold, B domain"/>
    <property type="match status" value="1"/>
</dbReference>
<dbReference type="Gene3D" id="3.40.50.261">
    <property type="entry name" value="Succinyl-CoA synthetase domains"/>
    <property type="match status" value="1"/>
</dbReference>
<dbReference type="HAMAP" id="MF_00558">
    <property type="entry name" value="Succ_CoA_beta"/>
    <property type="match status" value="1"/>
</dbReference>
<dbReference type="InterPro" id="IPR011761">
    <property type="entry name" value="ATP-grasp"/>
</dbReference>
<dbReference type="InterPro" id="IPR013650">
    <property type="entry name" value="ATP-grasp_succ-CoA_synth-type"/>
</dbReference>
<dbReference type="InterPro" id="IPR013815">
    <property type="entry name" value="ATP_grasp_subdomain_1"/>
</dbReference>
<dbReference type="InterPro" id="IPR017866">
    <property type="entry name" value="Succ-CoA_synthase_bsu_CS"/>
</dbReference>
<dbReference type="InterPro" id="IPR005811">
    <property type="entry name" value="SUCC_ACL_C"/>
</dbReference>
<dbReference type="InterPro" id="IPR005809">
    <property type="entry name" value="Succ_CoA_ligase-like_bsu"/>
</dbReference>
<dbReference type="InterPro" id="IPR016102">
    <property type="entry name" value="Succinyl-CoA_synth-like"/>
</dbReference>
<dbReference type="NCBIfam" id="NF001913">
    <property type="entry name" value="PRK00696.1"/>
    <property type="match status" value="1"/>
</dbReference>
<dbReference type="NCBIfam" id="TIGR01016">
    <property type="entry name" value="sucCoAbeta"/>
    <property type="match status" value="1"/>
</dbReference>
<dbReference type="PANTHER" id="PTHR11815:SF10">
    <property type="entry name" value="SUCCINATE--COA LIGASE [GDP-FORMING] SUBUNIT BETA, MITOCHONDRIAL"/>
    <property type="match status" value="1"/>
</dbReference>
<dbReference type="PANTHER" id="PTHR11815">
    <property type="entry name" value="SUCCINYL-COA SYNTHETASE BETA CHAIN"/>
    <property type="match status" value="1"/>
</dbReference>
<dbReference type="Pfam" id="PF08442">
    <property type="entry name" value="ATP-grasp_2"/>
    <property type="match status" value="1"/>
</dbReference>
<dbReference type="Pfam" id="PF00549">
    <property type="entry name" value="Ligase_CoA"/>
    <property type="match status" value="1"/>
</dbReference>
<dbReference type="PIRSF" id="PIRSF001554">
    <property type="entry name" value="SucCS_beta"/>
    <property type="match status" value="1"/>
</dbReference>
<dbReference type="SUPFAM" id="SSF56059">
    <property type="entry name" value="Glutathione synthetase ATP-binding domain-like"/>
    <property type="match status" value="1"/>
</dbReference>
<dbReference type="SUPFAM" id="SSF52210">
    <property type="entry name" value="Succinyl-CoA synthetase domains"/>
    <property type="match status" value="1"/>
</dbReference>
<dbReference type="PROSITE" id="PS50975">
    <property type="entry name" value="ATP_GRASP"/>
    <property type="match status" value="1"/>
</dbReference>
<dbReference type="PROSITE" id="PS01217">
    <property type="entry name" value="SUCCINYL_COA_LIG_3"/>
    <property type="match status" value="1"/>
</dbReference>
<sequence>MNLHEYQAKELLAGYGLPVQGGILARNGEEAAAAYDKLGGKFAVVKAQVHAGGRGKAGGVKVVKSREEAKEVAESLIGTNLVTYQTDANGQPVNSVLVCEDMYPVQTELYLGAVVDRSTRRITFMASTEGGVEIEKVAAETPEKIFKVTVDPLVGLQPCQAREVAFQLGLKDKQINEFVKLMTGAYKAFVDNDFALFEVNPLAVRENGALACVDGKIGIDSNALYRLPKIAELRDKSQENERELKASEFDLNYVALEGNIGCMVNGAGLAMATMDIIKLKGGQPANFLDVGGGATKDRVVEAFKLILEDKSVKGVLINIFGGIVRCDMIAEAIVAAVKEINVNVPVVVRLEGNNAELGAKILNESGLKLTSADGLNDAAEKIVAAVNA</sequence>
<evidence type="ECO:0000255" key="1">
    <source>
        <dbReference type="HAMAP-Rule" id="MF_00558"/>
    </source>
</evidence>